<protein>
    <recommendedName>
        <fullName>DNA gyrase subunit A</fullName>
        <ecNumber evidence="2">5.6.2.2</ecNumber>
    </recommendedName>
</protein>
<dbReference type="EC" id="5.6.2.2" evidence="2"/>
<dbReference type="EMBL" id="Z19108">
    <property type="protein sequence ID" value="CAA79524.1"/>
    <property type="molecule type" value="Genomic_DNA"/>
</dbReference>
<dbReference type="PIR" id="S35735">
    <property type="entry name" value="S35735"/>
</dbReference>
<dbReference type="SMR" id="P34030"/>
<dbReference type="STRING" id="2133.SCITRI_004"/>
<dbReference type="GO" id="GO:0005737">
    <property type="term" value="C:cytoplasm"/>
    <property type="evidence" value="ECO:0007669"/>
    <property type="project" value="UniProtKB-SubCell"/>
</dbReference>
<dbReference type="GO" id="GO:0009330">
    <property type="term" value="C:DNA topoisomerase type II (double strand cut, ATP-hydrolyzing) complex"/>
    <property type="evidence" value="ECO:0007669"/>
    <property type="project" value="TreeGrafter"/>
</dbReference>
<dbReference type="GO" id="GO:0005524">
    <property type="term" value="F:ATP binding"/>
    <property type="evidence" value="ECO:0007669"/>
    <property type="project" value="UniProtKB-KW"/>
</dbReference>
<dbReference type="GO" id="GO:0003677">
    <property type="term" value="F:DNA binding"/>
    <property type="evidence" value="ECO:0007669"/>
    <property type="project" value="UniProtKB-KW"/>
</dbReference>
<dbReference type="GO" id="GO:0034335">
    <property type="term" value="F:DNA negative supercoiling activity"/>
    <property type="evidence" value="ECO:0007669"/>
    <property type="project" value="UniProtKB-ARBA"/>
</dbReference>
<dbReference type="GO" id="GO:0006265">
    <property type="term" value="P:DNA topological change"/>
    <property type="evidence" value="ECO:0007669"/>
    <property type="project" value="InterPro"/>
</dbReference>
<dbReference type="FunFam" id="3.90.199.10:FF:000001">
    <property type="entry name" value="DNA gyrase subunit A"/>
    <property type="match status" value="1"/>
</dbReference>
<dbReference type="Gene3D" id="3.90.199.10">
    <property type="entry name" value="Topoisomerase II, domain 5"/>
    <property type="match status" value="1"/>
</dbReference>
<dbReference type="InterPro" id="IPR013760">
    <property type="entry name" value="Topo_IIA-like_dom_sf"/>
</dbReference>
<dbReference type="InterPro" id="IPR013758">
    <property type="entry name" value="Topo_IIA_A/C_ab"/>
</dbReference>
<dbReference type="InterPro" id="IPR002205">
    <property type="entry name" value="Topo_IIA_dom_A"/>
</dbReference>
<dbReference type="InterPro" id="IPR050220">
    <property type="entry name" value="Type_II_DNA_Topoisomerases"/>
</dbReference>
<dbReference type="PANTHER" id="PTHR43493:SF5">
    <property type="entry name" value="DNA GYRASE SUBUNIT A, CHLOROPLASTIC_MITOCHONDRIAL"/>
    <property type="match status" value="1"/>
</dbReference>
<dbReference type="PANTHER" id="PTHR43493">
    <property type="entry name" value="DNA GYRASE/TOPOISOMERASE SUBUNIT A"/>
    <property type="match status" value="1"/>
</dbReference>
<dbReference type="Pfam" id="PF00521">
    <property type="entry name" value="DNA_topoisoIV"/>
    <property type="match status" value="1"/>
</dbReference>
<dbReference type="SMART" id="SM00434">
    <property type="entry name" value="TOP4c"/>
    <property type="match status" value="1"/>
</dbReference>
<dbReference type="SUPFAM" id="SSF56719">
    <property type="entry name" value="Type II DNA topoisomerase"/>
    <property type="match status" value="1"/>
</dbReference>
<dbReference type="PROSITE" id="PS52040">
    <property type="entry name" value="TOPO_IIA"/>
    <property type="match status" value="1"/>
</dbReference>
<evidence type="ECO:0000250" key="1">
    <source>
        <dbReference type="UniProtKB" id="P0AES4"/>
    </source>
</evidence>
<evidence type="ECO:0000255" key="2">
    <source>
        <dbReference type="PROSITE-ProRule" id="PRU01384"/>
    </source>
</evidence>
<feature type="chain" id="PRO_0000145250" description="DNA gyrase subunit A">
    <location>
        <begin position="1"/>
        <end position="227" status="greater than"/>
    </location>
</feature>
<feature type="domain" description="Topo IIA-type catalytic" evidence="2">
    <location>
        <begin position="41"/>
        <end position="227"/>
    </location>
</feature>
<feature type="active site" description="O-(5'-phospho-DNA)-tyrosine intermediate" evidence="2">
    <location>
        <position position="129"/>
    </location>
</feature>
<feature type="non-terminal residue">
    <location>
        <position position="227"/>
    </location>
</feature>
<comment type="function">
    <text evidence="1">A type II topoisomerase that negatively supercoils closed circular double-stranded (ds) DNA in an ATP-dependent manner to modulate DNA topology and maintain chromosomes in an underwound state. Negative supercoiling favors strand separation, and DNA replication, transcription, recombination and repair, all of which involve strand separation. Also able to catalyze the interconversion of other topological isomers of dsDNA rings, including catenanes and knotted rings. Type II topoisomerases break and join 2 DNA strands simultaneously in an ATP-dependent manner.</text>
</comment>
<comment type="catalytic activity">
    <reaction evidence="2">
        <text>ATP-dependent breakage, passage and rejoining of double-stranded DNA.</text>
        <dbReference type="EC" id="5.6.2.2"/>
    </reaction>
</comment>
<comment type="subunit">
    <text evidence="1">Heterotetramer, composed of two GyrA and two GyrB chains. In the heterotetramer, GyrA contains the active site tyrosine that forms a transient covalent intermediate with DNA, while GyrB binds cofactors and catalyzes ATP hydrolysis.</text>
</comment>
<comment type="subcellular location">
    <subcellularLocation>
        <location evidence="1">Cytoplasm</location>
    </subcellularLocation>
</comment>
<comment type="miscellaneous">
    <text evidence="1">Few gyrases are as efficient as E.coli at forming negative supercoils. Not all organisms have 2 type II topoisomerases; in organisms with a single type II topoisomerase this enzyme also has to decatenate newly replicated chromosomes.</text>
</comment>
<comment type="similarity">
    <text>Belongs to the type II topoisomerase GyrA/ParC subunit family.</text>
</comment>
<accession>P34030</accession>
<gene>
    <name type="primary">gyrA</name>
</gene>
<name>GYRA_SPICI</name>
<keyword id="KW-0067">ATP-binding</keyword>
<keyword id="KW-0963">Cytoplasm</keyword>
<keyword id="KW-0238">DNA-binding</keyword>
<keyword id="KW-0413">Isomerase</keyword>
<keyword id="KW-0547">Nucleotide-binding</keyword>
<keyword id="KW-0799">Topoisomerase</keyword>
<sequence length="227" mass="25356">MMKSENDGYDYDGKIRDIDIADEMKNGFLDYAMSVIVSRAIPDVRDGLKPVHRRIIYAMWDLKMTYEKQHKKSARIVGEVIGKYHPHGDTAVYEAMVRMAQDFSYRYPLIDGHGNFGSMDGDPPAAMRYTEAKMSKIAGEIIKDIEKETTIFIDNYDGSEEEPTFLPGYFPNLLVNGASGIAVGMATNIPPHNLNEVIDGVIAVTKNPEITTVELMKIIKGPDFPTG</sequence>
<proteinExistence type="inferred from homology"/>
<organism>
    <name type="scientific">Spiroplasma citri</name>
    <dbReference type="NCBI Taxonomy" id="2133"/>
    <lineage>
        <taxon>Bacteria</taxon>
        <taxon>Bacillati</taxon>
        <taxon>Mycoplasmatota</taxon>
        <taxon>Mollicutes</taxon>
        <taxon>Entomoplasmatales</taxon>
        <taxon>Spiroplasmataceae</taxon>
        <taxon>Spiroplasma</taxon>
    </lineage>
</organism>
<reference key="1">
    <citation type="journal article" date="1994" name="Curr. Microbiol.">
        <title>Cloning and sequencing of the replication origin (oriC) of the Spiroplasma citri chromosome and construction of autonomously replicating artificial plasmids.</title>
        <authorList>
            <person name="Ye F."/>
            <person name="Renaudin J."/>
            <person name="Bove J.M."/>
            <person name="Laigret F."/>
        </authorList>
    </citation>
    <scope>NUCLEOTIDE SEQUENCE [GENOMIC DNA]</scope>
    <source>
        <strain>R8A2HP</strain>
    </source>
</reference>